<feature type="chain" id="PRO_0000364639" description="Fructose-1,6-bisphosphatase class 1 3">
    <location>
        <begin position="1"/>
        <end position="322"/>
    </location>
</feature>
<feature type="binding site" evidence="1">
    <location>
        <position position="84"/>
    </location>
    <ligand>
        <name>Mg(2+)</name>
        <dbReference type="ChEBI" id="CHEBI:18420"/>
        <label>1</label>
    </ligand>
</feature>
<feature type="binding site" evidence="1">
    <location>
        <position position="103"/>
    </location>
    <ligand>
        <name>Mg(2+)</name>
        <dbReference type="ChEBI" id="CHEBI:18420"/>
        <label>1</label>
    </ligand>
</feature>
<feature type="binding site" evidence="1">
    <location>
        <position position="103"/>
    </location>
    <ligand>
        <name>Mg(2+)</name>
        <dbReference type="ChEBI" id="CHEBI:18420"/>
        <label>2</label>
    </ligand>
</feature>
<feature type="binding site" evidence="1">
    <location>
        <position position="105"/>
    </location>
    <ligand>
        <name>Mg(2+)</name>
        <dbReference type="ChEBI" id="CHEBI:18420"/>
        <label>1</label>
    </ligand>
</feature>
<feature type="binding site" evidence="1">
    <location>
        <begin position="106"/>
        <end position="109"/>
    </location>
    <ligand>
        <name>substrate</name>
    </ligand>
</feature>
<feature type="binding site" evidence="1">
    <location>
        <position position="106"/>
    </location>
    <ligand>
        <name>Mg(2+)</name>
        <dbReference type="ChEBI" id="CHEBI:18420"/>
        <label>2</label>
    </ligand>
</feature>
<feature type="binding site" evidence="1">
    <location>
        <position position="198"/>
    </location>
    <ligand>
        <name>substrate</name>
    </ligand>
</feature>
<feature type="binding site" evidence="1">
    <location>
        <position position="262"/>
    </location>
    <ligand>
        <name>substrate</name>
    </ligand>
</feature>
<feature type="binding site" evidence="1">
    <location>
        <position position="268"/>
    </location>
    <ligand>
        <name>Mg(2+)</name>
        <dbReference type="ChEBI" id="CHEBI:18420"/>
        <label>2</label>
    </ligand>
</feature>
<gene>
    <name evidence="1" type="primary">fbp3</name>
    <name type="ordered locus">PSHAb0549</name>
</gene>
<accession>Q3ICJ5</accession>
<organism>
    <name type="scientific">Pseudoalteromonas translucida (strain TAC 125)</name>
    <dbReference type="NCBI Taxonomy" id="326442"/>
    <lineage>
        <taxon>Bacteria</taxon>
        <taxon>Pseudomonadati</taxon>
        <taxon>Pseudomonadota</taxon>
        <taxon>Gammaproteobacteria</taxon>
        <taxon>Alteromonadales</taxon>
        <taxon>Pseudoalteromonadaceae</taxon>
        <taxon>Pseudoalteromonas</taxon>
    </lineage>
</organism>
<dbReference type="EC" id="3.1.3.11" evidence="1"/>
<dbReference type="EMBL" id="CR954247">
    <property type="protein sequence ID" value="CAI89585.1"/>
    <property type="molecule type" value="Genomic_DNA"/>
</dbReference>
<dbReference type="SMR" id="Q3ICJ5"/>
<dbReference type="STRING" id="326442.PSHAb0549"/>
<dbReference type="KEGG" id="pha:PSHAb0549"/>
<dbReference type="PATRIC" id="fig|326442.8.peg.3455"/>
<dbReference type="eggNOG" id="COG0158">
    <property type="taxonomic scope" value="Bacteria"/>
</dbReference>
<dbReference type="HOGENOM" id="CLU_039977_0_0_6"/>
<dbReference type="BioCyc" id="PHAL326442:PSHA_RS17475-MONOMER"/>
<dbReference type="UniPathway" id="UPA00138"/>
<dbReference type="Proteomes" id="UP000006843">
    <property type="component" value="Chromosome II"/>
</dbReference>
<dbReference type="GO" id="GO:0005829">
    <property type="term" value="C:cytosol"/>
    <property type="evidence" value="ECO:0007669"/>
    <property type="project" value="TreeGrafter"/>
</dbReference>
<dbReference type="GO" id="GO:0042132">
    <property type="term" value="F:fructose 1,6-bisphosphate 1-phosphatase activity"/>
    <property type="evidence" value="ECO:0007669"/>
    <property type="project" value="UniProtKB-UniRule"/>
</dbReference>
<dbReference type="GO" id="GO:0000287">
    <property type="term" value="F:magnesium ion binding"/>
    <property type="evidence" value="ECO:0007669"/>
    <property type="project" value="UniProtKB-UniRule"/>
</dbReference>
<dbReference type="GO" id="GO:0030388">
    <property type="term" value="P:fructose 1,6-bisphosphate metabolic process"/>
    <property type="evidence" value="ECO:0007669"/>
    <property type="project" value="TreeGrafter"/>
</dbReference>
<dbReference type="GO" id="GO:0006002">
    <property type="term" value="P:fructose 6-phosphate metabolic process"/>
    <property type="evidence" value="ECO:0007669"/>
    <property type="project" value="TreeGrafter"/>
</dbReference>
<dbReference type="GO" id="GO:0006000">
    <property type="term" value="P:fructose metabolic process"/>
    <property type="evidence" value="ECO:0007669"/>
    <property type="project" value="TreeGrafter"/>
</dbReference>
<dbReference type="GO" id="GO:0006094">
    <property type="term" value="P:gluconeogenesis"/>
    <property type="evidence" value="ECO:0007669"/>
    <property type="project" value="UniProtKB-UniRule"/>
</dbReference>
<dbReference type="GO" id="GO:0005986">
    <property type="term" value="P:sucrose biosynthetic process"/>
    <property type="evidence" value="ECO:0007669"/>
    <property type="project" value="TreeGrafter"/>
</dbReference>
<dbReference type="CDD" id="cd00354">
    <property type="entry name" value="FBPase"/>
    <property type="match status" value="1"/>
</dbReference>
<dbReference type="Gene3D" id="3.40.190.80">
    <property type="match status" value="1"/>
</dbReference>
<dbReference type="Gene3D" id="3.30.540.10">
    <property type="entry name" value="Fructose-1,6-Bisphosphatase, subunit A, domain 1"/>
    <property type="match status" value="1"/>
</dbReference>
<dbReference type="HAMAP" id="MF_01855">
    <property type="entry name" value="FBPase_class1"/>
    <property type="match status" value="1"/>
</dbReference>
<dbReference type="InterPro" id="IPR044015">
    <property type="entry name" value="FBPase_C_dom"/>
</dbReference>
<dbReference type="InterPro" id="IPR000146">
    <property type="entry name" value="FBPase_class-1"/>
</dbReference>
<dbReference type="InterPro" id="IPR033391">
    <property type="entry name" value="FBPase_N"/>
</dbReference>
<dbReference type="InterPro" id="IPR028343">
    <property type="entry name" value="FBPtase"/>
</dbReference>
<dbReference type="InterPro" id="IPR020548">
    <property type="entry name" value="Fructose_bisphosphatase_AS"/>
</dbReference>
<dbReference type="NCBIfam" id="NF006779">
    <property type="entry name" value="PRK09293.1-3"/>
    <property type="match status" value="1"/>
</dbReference>
<dbReference type="PANTHER" id="PTHR11556">
    <property type="entry name" value="FRUCTOSE-1,6-BISPHOSPHATASE-RELATED"/>
    <property type="match status" value="1"/>
</dbReference>
<dbReference type="PANTHER" id="PTHR11556:SF35">
    <property type="entry name" value="SEDOHEPTULOSE-1,7-BISPHOSPHATASE, CHLOROPLASTIC"/>
    <property type="match status" value="1"/>
</dbReference>
<dbReference type="Pfam" id="PF00316">
    <property type="entry name" value="FBPase"/>
    <property type="match status" value="1"/>
</dbReference>
<dbReference type="Pfam" id="PF18913">
    <property type="entry name" value="FBPase_C"/>
    <property type="match status" value="1"/>
</dbReference>
<dbReference type="PIRSF" id="PIRSF500210">
    <property type="entry name" value="FBPtase"/>
    <property type="match status" value="1"/>
</dbReference>
<dbReference type="PIRSF" id="PIRSF000904">
    <property type="entry name" value="FBPtase_SBPase"/>
    <property type="match status" value="1"/>
</dbReference>
<dbReference type="PRINTS" id="PR00115">
    <property type="entry name" value="F16BPHPHTASE"/>
</dbReference>
<dbReference type="SUPFAM" id="SSF56655">
    <property type="entry name" value="Carbohydrate phosphatase"/>
    <property type="match status" value="1"/>
</dbReference>
<dbReference type="PROSITE" id="PS00124">
    <property type="entry name" value="FBPASE"/>
    <property type="match status" value="1"/>
</dbReference>
<comment type="catalytic activity">
    <reaction evidence="1">
        <text>beta-D-fructose 1,6-bisphosphate + H2O = beta-D-fructose 6-phosphate + phosphate</text>
        <dbReference type="Rhea" id="RHEA:11064"/>
        <dbReference type="ChEBI" id="CHEBI:15377"/>
        <dbReference type="ChEBI" id="CHEBI:32966"/>
        <dbReference type="ChEBI" id="CHEBI:43474"/>
        <dbReference type="ChEBI" id="CHEBI:57634"/>
        <dbReference type="EC" id="3.1.3.11"/>
    </reaction>
</comment>
<comment type="cofactor">
    <cofactor evidence="1">
        <name>Mg(2+)</name>
        <dbReference type="ChEBI" id="CHEBI:18420"/>
    </cofactor>
    <text evidence="1">Binds 2 magnesium ions per subunit.</text>
</comment>
<comment type="pathway">
    <text evidence="1">Carbohydrate biosynthesis; gluconeogenesis.</text>
</comment>
<comment type="subunit">
    <text evidence="1">Homotetramer.</text>
</comment>
<comment type="subcellular location">
    <subcellularLocation>
        <location evidence="1">Cytoplasm</location>
    </subcellularLocation>
</comment>
<comment type="similarity">
    <text evidence="1">Belongs to the FBPase class 1 family.</text>
</comment>
<proteinExistence type="inferred from homology"/>
<evidence type="ECO:0000255" key="1">
    <source>
        <dbReference type="HAMAP-Rule" id="MF_01855"/>
    </source>
</evidence>
<name>F16A3_PSET1</name>
<reference key="1">
    <citation type="journal article" date="2005" name="Genome Res.">
        <title>Coping with cold: the genome of the versatile marine Antarctica bacterium Pseudoalteromonas haloplanktis TAC125.</title>
        <authorList>
            <person name="Medigue C."/>
            <person name="Krin E."/>
            <person name="Pascal G."/>
            <person name="Barbe V."/>
            <person name="Bernsel A."/>
            <person name="Bertin P.N."/>
            <person name="Cheung F."/>
            <person name="Cruveiller S."/>
            <person name="D'Amico S."/>
            <person name="Duilio A."/>
            <person name="Fang G."/>
            <person name="Feller G."/>
            <person name="Ho C."/>
            <person name="Mangenot S."/>
            <person name="Marino G."/>
            <person name="Nilsson J."/>
            <person name="Parrilli E."/>
            <person name="Rocha E.P.C."/>
            <person name="Rouy Z."/>
            <person name="Sekowska A."/>
            <person name="Tutino M.L."/>
            <person name="Vallenet D."/>
            <person name="von Heijne G."/>
            <person name="Danchin A."/>
        </authorList>
    </citation>
    <scope>NUCLEOTIDE SEQUENCE [LARGE SCALE GENOMIC DNA]</scope>
    <source>
        <strain>TAC 125</strain>
    </source>
</reference>
<sequence length="322" mass="35429">MKNLYTQLEQDNVPKTLTLLLQSIVGACTEIATRINHGALSDVLGSLPDHNVQGEVQKKLDVIANNILIESLKKNKQVRAVASEEVEDIILCNSFGKYLICFDPLDGSSNTDVNGSLGTIFSITSASAAQTEVSEEDFFSTGRSIIAAGYVLYGPSLMLALSTGSGTHIYTLDPSNNNFMLTHPNLNIPEDTNEFSFNLSNQFKWPENVQKYIVDLQLGTDGIRKKNFNMRWLGAMVGDMHRILCKGGIFGYPEEKNFKYGKLRLLYEANPIAFLVEQANGLASNGTTSILDTVPSSIHQRIPVFIGSKNEVLLIEKYALGK</sequence>
<keyword id="KW-0119">Carbohydrate metabolism</keyword>
<keyword id="KW-0963">Cytoplasm</keyword>
<keyword id="KW-0378">Hydrolase</keyword>
<keyword id="KW-0460">Magnesium</keyword>
<keyword id="KW-0479">Metal-binding</keyword>
<keyword id="KW-1185">Reference proteome</keyword>
<protein>
    <recommendedName>
        <fullName evidence="1">Fructose-1,6-bisphosphatase class 1 3</fullName>
        <shortName evidence="1">FBPase class 1 3</shortName>
        <ecNumber evidence="1">3.1.3.11</ecNumber>
    </recommendedName>
    <alternativeName>
        <fullName evidence="1">D-fructose-1,6-bisphosphate 1-phosphohydrolase class 1 3</fullName>
    </alternativeName>
</protein>